<gene>
    <name type="ordered locus">APE_1117</name>
</gene>
<organism>
    <name type="scientific">Aeropyrum pernix (strain ATCC 700893 / DSM 11879 / JCM 9820 / NBRC 100138 / K1)</name>
    <dbReference type="NCBI Taxonomy" id="272557"/>
    <lineage>
        <taxon>Archaea</taxon>
        <taxon>Thermoproteota</taxon>
        <taxon>Thermoprotei</taxon>
        <taxon>Desulfurococcales</taxon>
        <taxon>Desulfurococcaceae</taxon>
        <taxon>Aeropyrum</taxon>
    </lineage>
</organism>
<protein>
    <recommendedName>
        <fullName evidence="1">UPF0173 metal-dependent hydrolase APE_1117</fullName>
    </recommendedName>
</protein>
<proteinExistence type="inferred from homology"/>
<sequence length="242" mass="25886">MARLTYLGHAAFQLEAGGRKILVDPWLSNPKSPVKPEEVEGVDLIVITHSHFDHLGDVGKIAAKNPGAKVLAVYEVADLAAEEIAKETGASKDELFNAGRVIGANIGGPVVLQDLGLKVAFTPATHSSVGVAAGAVIITGEGRVYHAGDTGVTMDMRLVGEIYKPHVALLPIGGHFTMDPVEAAKAVELIRPLVAIPMHYGTFPVLYGDPEEFKKRVEEKCLPTQVRILKPGESYEFDFSKA</sequence>
<comment type="similarity">
    <text evidence="1">Belongs to the UPF0173 family.</text>
</comment>
<keyword id="KW-0378">Hydrolase</keyword>
<keyword id="KW-1185">Reference proteome</keyword>
<evidence type="ECO:0000255" key="1">
    <source>
        <dbReference type="HAMAP-Rule" id="MF_00457"/>
    </source>
</evidence>
<name>Y1117_AERPE</name>
<feature type="chain" id="PRO_0000156390" description="UPF0173 metal-dependent hydrolase APE_1117">
    <location>
        <begin position="1"/>
        <end position="242"/>
    </location>
</feature>
<accession>Q9YCZ5</accession>
<reference key="1">
    <citation type="journal article" date="1999" name="DNA Res.">
        <title>Complete genome sequence of an aerobic hyper-thermophilic crenarchaeon, Aeropyrum pernix K1.</title>
        <authorList>
            <person name="Kawarabayasi Y."/>
            <person name="Hino Y."/>
            <person name="Horikawa H."/>
            <person name="Yamazaki S."/>
            <person name="Haikawa Y."/>
            <person name="Jin-no K."/>
            <person name="Takahashi M."/>
            <person name="Sekine M."/>
            <person name="Baba S."/>
            <person name="Ankai A."/>
            <person name="Kosugi H."/>
            <person name="Hosoyama A."/>
            <person name="Fukui S."/>
            <person name="Nagai Y."/>
            <person name="Nishijima K."/>
            <person name="Nakazawa H."/>
            <person name="Takamiya M."/>
            <person name="Masuda S."/>
            <person name="Funahashi T."/>
            <person name="Tanaka T."/>
            <person name="Kudoh Y."/>
            <person name="Yamazaki J."/>
            <person name="Kushida N."/>
            <person name="Oguchi A."/>
            <person name="Aoki K."/>
            <person name="Kubota K."/>
            <person name="Nakamura Y."/>
            <person name="Nomura N."/>
            <person name="Sako Y."/>
            <person name="Kikuchi H."/>
        </authorList>
    </citation>
    <scope>NUCLEOTIDE SEQUENCE [LARGE SCALE GENOMIC DNA]</scope>
    <source>
        <strain>ATCC 700893 / DSM 11879 / JCM 9820 / NBRC 100138 / K1</strain>
    </source>
</reference>
<dbReference type="EMBL" id="BA000002">
    <property type="protein sequence ID" value="BAA80102.1"/>
    <property type="molecule type" value="Genomic_DNA"/>
</dbReference>
<dbReference type="PIR" id="F72712">
    <property type="entry name" value="F72712"/>
</dbReference>
<dbReference type="RefSeq" id="WP_010866178.1">
    <property type="nucleotide sequence ID" value="NC_000854.2"/>
</dbReference>
<dbReference type="SMR" id="Q9YCZ5"/>
<dbReference type="STRING" id="272557.APE_1117"/>
<dbReference type="EnsemblBacteria" id="BAA80102">
    <property type="protein sequence ID" value="BAA80102"/>
    <property type="gene ID" value="APE_1117"/>
</dbReference>
<dbReference type="GeneID" id="1445796"/>
<dbReference type="KEGG" id="ape:APE_1117"/>
<dbReference type="eggNOG" id="arCOG00497">
    <property type="taxonomic scope" value="Archaea"/>
</dbReference>
<dbReference type="Proteomes" id="UP000002518">
    <property type="component" value="Chromosome"/>
</dbReference>
<dbReference type="GO" id="GO:0016787">
    <property type="term" value="F:hydrolase activity"/>
    <property type="evidence" value="ECO:0007669"/>
    <property type="project" value="UniProtKB-UniRule"/>
</dbReference>
<dbReference type="Gene3D" id="3.60.15.10">
    <property type="entry name" value="Ribonuclease Z/Hydroxyacylglutathione hydrolase-like"/>
    <property type="match status" value="1"/>
</dbReference>
<dbReference type="HAMAP" id="MF_00457">
    <property type="entry name" value="UPF0173"/>
    <property type="match status" value="1"/>
</dbReference>
<dbReference type="InterPro" id="IPR001279">
    <property type="entry name" value="Metallo-B-lactamas"/>
</dbReference>
<dbReference type="InterPro" id="IPR036866">
    <property type="entry name" value="RibonucZ/Hydroxyglut_hydro"/>
</dbReference>
<dbReference type="InterPro" id="IPR022877">
    <property type="entry name" value="UPF0173"/>
</dbReference>
<dbReference type="InterPro" id="IPR050114">
    <property type="entry name" value="UPF0173_UPF0282_UlaG_hydrolase"/>
</dbReference>
<dbReference type="NCBIfam" id="NF001911">
    <property type="entry name" value="PRK00685.1"/>
    <property type="match status" value="1"/>
</dbReference>
<dbReference type="PANTHER" id="PTHR43546:SF3">
    <property type="entry name" value="UPF0173 METAL-DEPENDENT HYDROLASE MJ1163"/>
    <property type="match status" value="1"/>
</dbReference>
<dbReference type="PANTHER" id="PTHR43546">
    <property type="entry name" value="UPF0173 METAL-DEPENDENT HYDROLASE MJ1163-RELATED"/>
    <property type="match status" value="1"/>
</dbReference>
<dbReference type="Pfam" id="PF12706">
    <property type="entry name" value="Lactamase_B_2"/>
    <property type="match status" value="1"/>
</dbReference>
<dbReference type="SMART" id="SM00849">
    <property type="entry name" value="Lactamase_B"/>
    <property type="match status" value="1"/>
</dbReference>
<dbReference type="SUPFAM" id="SSF56281">
    <property type="entry name" value="Metallo-hydrolase/oxidoreductase"/>
    <property type="match status" value="1"/>
</dbReference>